<sequence length="389" mass="41064">MTDAQIRSLIGRPPASGAWREGDPVADRLFASVGGVDLEAGGRIPSVRVAYETFGERDPDGGNAVLVLHALTGDSHLRGPAGPGQPTGGWWSGIVGPGLAIDTDRWFVVAPNMLGGCQGTTGPASLAPDGAEWGARFPFITIRDQVAVQAALADALGIDVWAAVVGGSMGGMQALEWGVGLPGRMRRLAILAAPAIASADQIALNSVQAEAIRMDPAYRDGDYFDAADGDGPHRGLALARRMALLNYRSPDELNQRFSRSWQSGISPMGDEGRYAVESYLDFHGNKFTRRFDATSYIRLIDAMSSHDVGRDRGGVEAALASVRAATLVVGIDSDRLFPVPDQRLVARHVPGSVDGGEVVVISSDYGHDGFLIENEAVGRALARLLDTPA</sequence>
<keyword id="KW-0012">Acyltransferase</keyword>
<keyword id="KW-0028">Amino-acid biosynthesis</keyword>
<keyword id="KW-0963">Cytoplasm</keyword>
<keyword id="KW-0486">Methionine biosynthesis</keyword>
<keyword id="KW-0808">Transferase</keyword>
<protein>
    <recommendedName>
        <fullName evidence="1">Homoserine O-acetyltransferase</fullName>
        <shortName evidence="1">HAT</shortName>
        <ecNumber evidence="1">2.3.1.31</ecNumber>
    </recommendedName>
    <alternativeName>
        <fullName evidence="1">Homoserine transacetylase</fullName>
        <shortName evidence="1">HTA</shortName>
    </alternativeName>
</protein>
<dbReference type="EC" id="2.3.1.31" evidence="1"/>
<dbReference type="EMBL" id="AM711867">
    <property type="protein sequence ID" value="CAN01380.1"/>
    <property type="molecule type" value="Genomic_DNA"/>
</dbReference>
<dbReference type="SMR" id="A5CQM6"/>
<dbReference type="ESTHER" id="clam3-metx">
    <property type="family name" value="Homoserine_transacetylase"/>
</dbReference>
<dbReference type="KEGG" id="cmi:CMM_1335"/>
<dbReference type="eggNOG" id="COG2021">
    <property type="taxonomic scope" value="Bacteria"/>
</dbReference>
<dbReference type="HOGENOM" id="CLU_028760_1_0_11"/>
<dbReference type="UniPathway" id="UPA00051">
    <property type="reaction ID" value="UER00074"/>
</dbReference>
<dbReference type="Proteomes" id="UP000001564">
    <property type="component" value="Chromosome"/>
</dbReference>
<dbReference type="GO" id="GO:0005737">
    <property type="term" value="C:cytoplasm"/>
    <property type="evidence" value="ECO:0007669"/>
    <property type="project" value="UniProtKB-SubCell"/>
</dbReference>
<dbReference type="GO" id="GO:0004414">
    <property type="term" value="F:homoserine O-acetyltransferase activity"/>
    <property type="evidence" value="ECO:0007669"/>
    <property type="project" value="UniProtKB-UniRule"/>
</dbReference>
<dbReference type="GO" id="GO:0009092">
    <property type="term" value="P:homoserine metabolic process"/>
    <property type="evidence" value="ECO:0007669"/>
    <property type="project" value="TreeGrafter"/>
</dbReference>
<dbReference type="GO" id="GO:0009086">
    <property type="term" value="P:methionine biosynthetic process"/>
    <property type="evidence" value="ECO:0007669"/>
    <property type="project" value="UniProtKB-UniRule"/>
</dbReference>
<dbReference type="Gene3D" id="1.10.1740.110">
    <property type="match status" value="1"/>
</dbReference>
<dbReference type="Gene3D" id="3.40.50.1820">
    <property type="entry name" value="alpha/beta hydrolase"/>
    <property type="match status" value="1"/>
</dbReference>
<dbReference type="HAMAP" id="MF_00296">
    <property type="entry name" value="MetX_acyltransf"/>
    <property type="match status" value="1"/>
</dbReference>
<dbReference type="InterPro" id="IPR000073">
    <property type="entry name" value="AB_hydrolase_1"/>
</dbReference>
<dbReference type="InterPro" id="IPR029058">
    <property type="entry name" value="AB_hydrolase_fold"/>
</dbReference>
<dbReference type="InterPro" id="IPR008220">
    <property type="entry name" value="HAT_MetX-like"/>
</dbReference>
<dbReference type="NCBIfam" id="TIGR01392">
    <property type="entry name" value="homoserO_Ac_trn"/>
    <property type="match status" value="1"/>
</dbReference>
<dbReference type="NCBIfam" id="NF001209">
    <property type="entry name" value="PRK00175.1"/>
    <property type="match status" value="1"/>
</dbReference>
<dbReference type="PANTHER" id="PTHR32268">
    <property type="entry name" value="HOMOSERINE O-ACETYLTRANSFERASE"/>
    <property type="match status" value="1"/>
</dbReference>
<dbReference type="PANTHER" id="PTHR32268:SF11">
    <property type="entry name" value="HOMOSERINE O-ACETYLTRANSFERASE"/>
    <property type="match status" value="1"/>
</dbReference>
<dbReference type="Pfam" id="PF00561">
    <property type="entry name" value="Abhydrolase_1"/>
    <property type="match status" value="1"/>
</dbReference>
<dbReference type="PIRSF" id="PIRSF000443">
    <property type="entry name" value="Homoser_Ac_trans"/>
    <property type="match status" value="1"/>
</dbReference>
<dbReference type="SUPFAM" id="SSF53474">
    <property type="entry name" value="alpha/beta-Hydrolases"/>
    <property type="match status" value="1"/>
</dbReference>
<proteinExistence type="inferred from homology"/>
<name>METXA_CLAM3</name>
<gene>
    <name evidence="1" type="primary">metXA</name>
    <name type="ordered locus">CMM_1335</name>
</gene>
<comment type="function">
    <text evidence="1">Transfers an acetyl group from acetyl-CoA to L-homoserine, forming acetyl-L-homoserine.</text>
</comment>
<comment type="catalytic activity">
    <reaction evidence="1">
        <text>L-homoserine + acetyl-CoA = O-acetyl-L-homoserine + CoA</text>
        <dbReference type="Rhea" id="RHEA:13701"/>
        <dbReference type="ChEBI" id="CHEBI:57287"/>
        <dbReference type="ChEBI" id="CHEBI:57288"/>
        <dbReference type="ChEBI" id="CHEBI:57476"/>
        <dbReference type="ChEBI" id="CHEBI:57716"/>
        <dbReference type="EC" id="2.3.1.31"/>
    </reaction>
</comment>
<comment type="pathway">
    <text evidence="1">Amino-acid biosynthesis; L-methionine biosynthesis via de novo pathway; O-acetyl-L-homoserine from L-homoserine: step 1/1.</text>
</comment>
<comment type="subunit">
    <text evidence="1">Homodimer.</text>
</comment>
<comment type="subcellular location">
    <subcellularLocation>
        <location evidence="1">Cytoplasm</location>
    </subcellularLocation>
</comment>
<comment type="similarity">
    <text evidence="1">Belongs to the AB hydrolase superfamily. MetX family.</text>
</comment>
<organism>
    <name type="scientific">Clavibacter michiganensis subsp. michiganensis (strain NCPPB 382)</name>
    <dbReference type="NCBI Taxonomy" id="443906"/>
    <lineage>
        <taxon>Bacteria</taxon>
        <taxon>Bacillati</taxon>
        <taxon>Actinomycetota</taxon>
        <taxon>Actinomycetes</taxon>
        <taxon>Micrococcales</taxon>
        <taxon>Microbacteriaceae</taxon>
        <taxon>Clavibacter</taxon>
    </lineage>
</organism>
<evidence type="ECO:0000255" key="1">
    <source>
        <dbReference type="HAMAP-Rule" id="MF_00296"/>
    </source>
</evidence>
<feature type="chain" id="PRO_1000078941" description="Homoserine O-acetyltransferase">
    <location>
        <begin position="1"/>
        <end position="389"/>
    </location>
</feature>
<feature type="domain" description="AB hydrolase-1" evidence="1">
    <location>
        <begin position="63"/>
        <end position="371"/>
    </location>
</feature>
<feature type="active site" description="Nucleophile" evidence="1">
    <location>
        <position position="168"/>
    </location>
</feature>
<feature type="active site" evidence="1">
    <location>
        <position position="334"/>
    </location>
</feature>
<feature type="active site" evidence="1">
    <location>
        <position position="367"/>
    </location>
</feature>
<feature type="binding site" evidence="1">
    <location>
        <position position="240"/>
    </location>
    <ligand>
        <name>substrate</name>
    </ligand>
</feature>
<feature type="binding site" evidence="1">
    <location>
        <position position="368"/>
    </location>
    <ligand>
        <name>substrate</name>
    </ligand>
</feature>
<accession>A5CQM6</accession>
<reference key="1">
    <citation type="journal article" date="2008" name="J. Bacteriol.">
        <title>The genome sequence of the tomato-pathogenic actinomycete Clavibacter michiganensis subsp. michiganensis NCPPB382 reveals a large island involved in pathogenicity.</title>
        <authorList>
            <person name="Gartemann K.-H."/>
            <person name="Abt B."/>
            <person name="Bekel T."/>
            <person name="Burger A."/>
            <person name="Engemann J."/>
            <person name="Fluegel M."/>
            <person name="Gaigalat L."/>
            <person name="Goesmann A."/>
            <person name="Graefen I."/>
            <person name="Kalinowski J."/>
            <person name="Kaup O."/>
            <person name="Kirchner O."/>
            <person name="Krause L."/>
            <person name="Linke B."/>
            <person name="McHardy A."/>
            <person name="Meyer F."/>
            <person name="Pohle S."/>
            <person name="Rueckert C."/>
            <person name="Schneiker S."/>
            <person name="Zellermann E.-M."/>
            <person name="Puehler A."/>
            <person name="Eichenlaub R."/>
            <person name="Kaiser O."/>
            <person name="Bartels D."/>
        </authorList>
    </citation>
    <scope>NUCLEOTIDE SEQUENCE [LARGE SCALE GENOMIC DNA]</scope>
    <source>
        <strain>NCPPB 382</strain>
    </source>
</reference>